<reference key="1">
    <citation type="submission" date="2003-06" db="EMBL/GenBank/DDBJ databases">
        <title>The complete genome sequence of Haemophilus ducreyi.</title>
        <authorList>
            <person name="Munson R.S. Jr."/>
            <person name="Ray W.C."/>
            <person name="Mahairas G."/>
            <person name="Sabo P."/>
            <person name="Mungur R."/>
            <person name="Johnson L."/>
            <person name="Nguyen D."/>
            <person name="Wang J."/>
            <person name="Forst C."/>
            <person name="Hood L."/>
        </authorList>
    </citation>
    <scope>NUCLEOTIDE SEQUENCE [LARGE SCALE GENOMIC DNA]</scope>
    <source>
        <strain>35000HP / ATCC 700724</strain>
    </source>
</reference>
<evidence type="ECO:0000255" key="1">
    <source>
        <dbReference type="HAMAP-Rule" id="MF_00592"/>
    </source>
</evidence>
<accession>Q7VMS9</accession>
<sequence length="258" mass="27512">MSLKSSAKVALSLMDLTTLNDNATDEKVIALCQQGNTEFGTPAAVCVYPRFVPVARKALKAQQTEQVKIATVTNFPHGNDDIDIAVTETKAAIAYGADEVDVVFPYKALMAGNEQVGFELVKQCKAVCQASGVLLKVIIETGELKTPALIRKASELAIQAGADFIKTSTGKVAINATLESARIMLETIRDLNVAEKVGFKAAGGVKTTEEAEQYLALAKTILGEDWVNSAHFRFGASSLLNNLLATLNDQTAQVVTGY</sequence>
<protein>
    <recommendedName>
        <fullName evidence="1">Deoxyribose-phosphate aldolase</fullName>
        <shortName evidence="1">DERA</shortName>
        <ecNumber evidence="1">4.1.2.4</ecNumber>
    </recommendedName>
    <alternativeName>
        <fullName evidence="1">2-deoxy-D-ribose 5-phosphate aldolase</fullName>
    </alternativeName>
    <alternativeName>
        <fullName evidence="1">Phosphodeoxyriboaldolase</fullName>
        <shortName evidence="1">Deoxyriboaldolase</shortName>
    </alternativeName>
</protein>
<gene>
    <name evidence="1" type="primary">deoC</name>
    <name type="ordered locus">HD_0888</name>
</gene>
<keyword id="KW-0963">Cytoplasm</keyword>
<keyword id="KW-0456">Lyase</keyword>
<keyword id="KW-1185">Reference proteome</keyword>
<keyword id="KW-0704">Schiff base</keyword>
<comment type="function">
    <text evidence="1">Catalyzes a reversible aldol reaction between acetaldehyde and D-glyceraldehyde 3-phosphate to generate 2-deoxy-D-ribose 5-phosphate.</text>
</comment>
<comment type="catalytic activity">
    <reaction evidence="1">
        <text>2-deoxy-D-ribose 5-phosphate = D-glyceraldehyde 3-phosphate + acetaldehyde</text>
        <dbReference type="Rhea" id="RHEA:12821"/>
        <dbReference type="ChEBI" id="CHEBI:15343"/>
        <dbReference type="ChEBI" id="CHEBI:59776"/>
        <dbReference type="ChEBI" id="CHEBI:62877"/>
        <dbReference type="EC" id="4.1.2.4"/>
    </reaction>
</comment>
<comment type="pathway">
    <text evidence="1">Carbohydrate degradation; 2-deoxy-D-ribose 1-phosphate degradation; D-glyceraldehyde 3-phosphate and acetaldehyde from 2-deoxy-alpha-D-ribose 1-phosphate: step 2/2.</text>
</comment>
<comment type="subcellular location">
    <subcellularLocation>
        <location evidence="1">Cytoplasm</location>
    </subcellularLocation>
</comment>
<comment type="similarity">
    <text evidence="1">Belongs to the DeoC/FbaB aldolase family. DeoC type 2 subfamily.</text>
</comment>
<feature type="chain" id="PRO_0000057299" description="Deoxyribose-phosphate aldolase">
    <location>
        <begin position="1"/>
        <end position="258"/>
    </location>
</feature>
<feature type="active site" description="Proton donor/acceptor" evidence="1">
    <location>
        <position position="101"/>
    </location>
</feature>
<feature type="active site" description="Schiff-base intermediate with acetaldehyde" evidence="1">
    <location>
        <position position="166"/>
    </location>
</feature>
<feature type="active site" description="Proton donor/acceptor" evidence="1">
    <location>
        <position position="200"/>
    </location>
</feature>
<proteinExistence type="inferred from homology"/>
<organism>
    <name type="scientific">Haemophilus ducreyi (strain 35000HP / ATCC 700724)</name>
    <dbReference type="NCBI Taxonomy" id="233412"/>
    <lineage>
        <taxon>Bacteria</taxon>
        <taxon>Pseudomonadati</taxon>
        <taxon>Pseudomonadota</taxon>
        <taxon>Gammaproteobacteria</taxon>
        <taxon>Pasteurellales</taxon>
        <taxon>Pasteurellaceae</taxon>
        <taxon>Haemophilus</taxon>
    </lineage>
</organism>
<name>DEOC_HAEDU</name>
<dbReference type="EC" id="4.1.2.4" evidence="1"/>
<dbReference type="EMBL" id="AE017143">
    <property type="protein sequence ID" value="AAP95774.1"/>
    <property type="molecule type" value="Genomic_DNA"/>
</dbReference>
<dbReference type="RefSeq" id="WP_010944824.1">
    <property type="nucleotide sequence ID" value="NC_002940.2"/>
</dbReference>
<dbReference type="SMR" id="Q7VMS9"/>
<dbReference type="STRING" id="233412.HD_0888"/>
<dbReference type="KEGG" id="hdu:HD_0888"/>
<dbReference type="eggNOG" id="COG0274">
    <property type="taxonomic scope" value="Bacteria"/>
</dbReference>
<dbReference type="HOGENOM" id="CLU_053595_3_1_6"/>
<dbReference type="OrthoDB" id="6579831at2"/>
<dbReference type="UniPathway" id="UPA00002">
    <property type="reaction ID" value="UER00468"/>
</dbReference>
<dbReference type="Proteomes" id="UP000001022">
    <property type="component" value="Chromosome"/>
</dbReference>
<dbReference type="GO" id="GO:0005737">
    <property type="term" value="C:cytoplasm"/>
    <property type="evidence" value="ECO:0007669"/>
    <property type="project" value="UniProtKB-SubCell"/>
</dbReference>
<dbReference type="GO" id="GO:0004139">
    <property type="term" value="F:deoxyribose-phosphate aldolase activity"/>
    <property type="evidence" value="ECO:0007669"/>
    <property type="project" value="UniProtKB-UniRule"/>
</dbReference>
<dbReference type="GO" id="GO:0006018">
    <property type="term" value="P:2-deoxyribose 1-phosphate catabolic process"/>
    <property type="evidence" value="ECO:0007669"/>
    <property type="project" value="UniProtKB-UniRule"/>
</dbReference>
<dbReference type="GO" id="GO:0016052">
    <property type="term" value="P:carbohydrate catabolic process"/>
    <property type="evidence" value="ECO:0007669"/>
    <property type="project" value="TreeGrafter"/>
</dbReference>
<dbReference type="GO" id="GO:0009264">
    <property type="term" value="P:deoxyribonucleotide catabolic process"/>
    <property type="evidence" value="ECO:0007669"/>
    <property type="project" value="InterPro"/>
</dbReference>
<dbReference type="CDD" id="cd00959">
    <property type="entry name" value="DeoC"/>
    <property type="match status" value="1"/>
</dbReference>
<dbReference type="Gene3D" id="3.20.20.70">
    <property type="entry name" value="Aldolase class I"/>
    <property type="match status" value="1"/>
</dbReference>
<dbReference type="HAMAP" id="MF_00592">
    <property type="entry name" value="DeoC_type2"/>
    <property type="match status" value="1"/>
</dbReference>
<dbReference type="InterPro" id="IPR013785">
    <property type="entry name" value="Aldolase_TIM"/>
</dbReference>
<dbReference type="InterPro" id="IPR011343">
    <property type="entry name" value="DeoC"/>
</dbReference>
<dbReference type="InterPro" id="IPR002915">
    <property type="entry name" value="DeoC/FbaB/LacD_aldolase"/>
</dbReference>
<dbReference type="InterPro" id="IPR023649">
    <property type="entry name" value="DeoC_typeII"/>
</dbReference>
<dbReference type="NCBIfam" id="TIGR00126">
    <property type="entry name" value="deoC"/>
    <property type="match status" value="1"/>
</dbReference>
<dbReference type="PANTHER" id="PTHR10889">
    <property type="entry name" value="DEOXYRIBOSE-PHOSPHATE ALDOLASE"/>
    <property type="match status" value="1"/>
</dbReference>
<dbReference type="PANTHER" id="PTHR10889:SF3">
    <property type="entry name" value="DEOXYRIBOSE-PHOSPHATE ALDOLASE"/>
    <property type="match status" value="1"/>
</dbReference>
<dbReference type="Pfam" id="PF01791">
    <property type="entry name" value="DeoC"/>
    <property type="match status" value="1"/>
</dbReference>
<dbReference type="PIRSF" id="PIRSF001357">
    <property type="entry name" value="DeoC"/>
    <property type="match status" value="1"/>
</dbReference>
<dbReference type="SMART" id="SM01133">
    <property type="entry name" value="DeoC"/>
    <property type="match status" value="1"/>
</dbReference>
<dbReference type="SUPFAM" id="SSF51569">
    <property type="entry name" value="Aldolase"/>
    <property type="match status" value="1"/>
</dbReference>